<accession>Q9D1U0</accession>
<comment type="subunit">
    <text evidence="1">Homodimer.</text>
</comment>
<comment type="domain">
    <text evidence="1">The galectin domain is atypical and does not bind beta-galactoside sugars.</text>
</comment>
<name>GRIFN_MOUSE</name>
<organism>
    <name type="scientific">Mus musculus</name>
    <name type="common">Mouse</name>
    <dbReference type="NCBI Taxonomy" id="10090"/>
    <lineage>
        <taxon>Eukaryota</taxon>
        <taxon>Metazoa</taxon>
        <taxon>Chordata</taxon>
        <taxon>Craniata</taxon>
        <taxon>Vertebrata</taxon>
        <taxon>Euteleostomi</taxon>
        <taxon>Mammalia</taxon>
        <taxon>Eutheria</taxon>
        <taxon>Euarchontoglires</taxon>
        <taxon>Glires</taxon>
        <taxon>Rodentia</taxon>
        <taxon>Myomorpha</taxon>
        <taxon>Muroidea</taxon>
        <taxon>Muridae</taxon>
        <taxon>Murinae</taxon>
        <taxon>Mus</taxon>
        <taxon>Mus</taxon>
    </lineage>
</organism>
<sequence>MTLQFEAFCAGGLAPGWSLTVQGHADAGEEKFEINFLTDAGDIAFHVKPRFSSATVVGNAFQGGRWGQEEVSSIFPLTLGEPFEMEVSADAEHFHIYAQEQKVLQFPHRHRPLATITRVRVLSEHRLAQVELAKRSLSWGDGGY</sequence>
<dbReference type="EMBL" id="AK021365">
    <property type="protein sequence ID" value="BAB32388.1"/>
    <property type="molecule type" value="mRNA"/>
</dbReference>
<dbReference type="EMBL" id="BC107323">
    <property type="protein sequence ID" value="AAI07324.1"/>
    <property type="molecule type" value="mRNA"/>
</dbReference>
<dbReference type="EMBL" id="BC107324">
    <property type="protein sequence ID" value="AAI07325.1"/>
    <property type="molecule type" value="mRNA"/>
</dbReference>
<dbReference type="CCDS" id="CCDS39357.1"/>
<dbReference type="RefSeq" id="NP_084298.1">
    <property type="nucleotide sequence ID" value="NM_030022.1"/>
</dbReference>
<dbReference type="SMR" id="Q9D1U0"/>
<dbReference type="BioGRID" id="219082">
    <property type="interactions" value="2"/>
</dbReference>
<dbReference type="FunCoup" id="Q9D1U0">
    <property type="interactions" value="6"/>
</dbReference>
<dbReference type="STRING" id="10090.ENSMUSP00000039263"/>
<dbReference type="PhosphoSitePlus" id="Q9D1U0"/>
<dbReference type="PaxDb" id="10090-ENSMUSP00000039263"/>
<dbReference type="ProteomicsDB" id="269830"/>
<dbReference type="Antibodypedia" id="82145">
    <property type="antibodies" value="1 antibodies from 1 providers"/>
</dbReference>
<dbReference type="Ensembl" id="ENSMUST00000042993.7">
    <property type="protein sequence ID" value="ENSMUSP00000039263.7"/>
    <property type="gene ID" value="ENSMUSG00000036586.7"/>
</dbReference>
<dbReference type="GeneID" id="77998"/>
<dbReference type="KEGG" id="mmu:77998"/>
<dbReference type="UCSC" id="uc009aht.1">
    <property type="organism name" value="mouse"/>
</dbReference>
<dbReference type="AGR" id="MGI:1925248"/>
<dbReference type="CTD" id="402635"/>
<dbReference type="MGI" id="MGI:1925248">
    <property type="gene designation" value="Grifin"/>
</dbReference>
<dbReference type="VEuPathDB" id="HostDB:ENSMUSG00000036586"/>
<dbReference type="eggNOG" id="KOG3587">
    <property type="taxonomic scope" value="Eukaryota"/>
</dbReference>
<dbReference type="GeneTree" id="ENSGT00940000162164"/>
<dbReference type="HOGENOM" id="CLU_037794_3_0_1"/>
<dbReference type="InParanoid" id="Q9D1U0"/>
<dbReference type="OMA" id="GICPGWS"/>
<dbReference type="OrthoDB" id="8112755at2759"/>
<dbReference type="PhylomeDB" id="Q9D1U0"/>
<dbReference type="TreeFam" id="TF315551"/>
<dbReference type="BioGRID-ORCS" id="77998">
    <property type="hits" value="3 hits in 75 CRISPR screens"/>
</dbReference>
<dbReference type="PRO" id="PR:Q9D1U0"/>
<dbReference type="Proteomes" id="UP000000589">
    <property type="component" value="Chromosome 5"/>
</dbReference>
<dbReference type="RNAct" id="Q9D1U0">
    <property type="molecule type" value="protein"/>
</dbReference>
<dbReference type="Bgee" id="ENSMUSG00000036586">
    <property type="expression patterns" value="Expressed in epithelium of lens and 32 other cell types or tissues"/>
</dbReference>
<dbReference type="GO" id="GO:0030246">
    <property type="term" value="F:carbohydrate binding"/>
    <property type="evidence" value="ECO:0007669"/>
    <property type="project" value="UniProtKB-KW"/>
</dbReference>
<dbReference type="CDD" id="cd00070">
    <property type="entry name" value="GLECT"/>
    <property type="match status" value="1"/>
</dbReference>
<dbReference type="FunFam" id="2.60.120.200:FF:000021">
    <property type="entry name" value="Galectin"/>
    <property type="match status" value="1"/>
</dbReference>
<dbReference type="Gene3D" id="2.60.120.200">
    <property type="match status" value="1"/>
</dbReference>
<dbReference type="InterPro" id="IPR013320">
    <property type="entry name" value="ConA-like_dom_sf"/>
</dbReference>
<dbReference type="InterPro" id="IPR044156">
    <property type="entry name" value="Galectin-like"/>
</dbReference>
<dbReference type="InterPro" id="IPR001079">
    <property type="entry name" value="Galectin_CRD"/>
</dbReference>
<dbReference type="PANTHER" id="PTHR11346">
    <property type="entry name" value="GALECTIN"/>
    <property type="match status" value="1"/>
</dbReference>
<dbReference type="PANTHER" id="PTHR11346:SF21">
    <property type="entry name" value="GRIFIN"/>
    <property type="match status" value="1"/>
</dbReference>
<dbReference type="Pfam" id="PF00337">
    <property type="entry name" value="Gal-bind_lectin"/>
    <property type="match status" value="1"/>
</dbReference>
<dbReference type="SMART" id="SM00908">
    <property type="entry name" value="Gal-bind_lectin"/>
    <property type="match status" value="1"/>
</dbReference>
<dbReference type="SMART" id="SM00276">
    <property type="entry name" value="GLECT"/>
    <property type="match status" value="1"/>
</dbReference>
<dbReference type="SUPFAM" id="SSF49899">
    <property type="entry name" value="Concanavalin A-like lectins/glucanases"/>
    <property type="match status" value="1"/>
</dbReference>
<dbReference type="PROSITE" id="PS51304">
    <property type="entry name" value="GALECTIN"/>
    <property type="match status" value="1"/>
</dbReference>
<proteinExistence type="evidence at transcript level"/>
<feature type="chain" id="PRO_0000315763" description="Grifin">
    <location>
        <begin position="1"/>
        <end position="144"/>
    </location>
</feature>
<feature type="domain" description="Galectin" evidence="3">
    <location>
        <begin position="5"/>
        <end position="133"/>
    </location>
</feature>
<feature type="modified residue" description="Phosphoserine" evidence="2">
    <location>
        <position position="138"/>
    </location>
</feature>
<keyword id="KW-0430">Lectin</keyword>
<keyword id="KW-0597">Phosphoprotein</keyword>
<keyword id="KW-1185">Reference proteome</keyword>
<protein>
    <recommendedName>
        <fullName>Grifin</fullName>
    </recommendedName>
    <alternativeName>
        <fullName>Galectin-related inter-fiber protein</fullName>
    </alternativeName>
</protein>
<reference key="1">
    <citation type="journal article" date="2005" name="Science">
        <title>The transcriptional landscape of the mammalian genome.</title>
        <authorList>
            <person name="Carninci P."/>
            <person name="Kasukawa T."/>
            <person name="Katayama S."/>
            <person name="Gough J."/>
            <person name="Frith M.C."/>
            <person name="Maeda N."/>
            <person name="Oyama R."/>
            <person name="Ravasi T."/>
            <person name="Lenhard B."/>
            <person name="Wells C."/>
            <person name="Kodzius R."/>
            <person name="Shimokawa K."/>
            <person name="Bajic V.B."/>
            <person name="Brenner S.E."/>
            <person name="Batalov S."/>
            <person name="Forrest A.R."/>
            <person name="Zavolan M."/>
            <person name="Davis M.J."/>
            <person name="Wilming L.G."/>
            <person name="Aidinis V."/>
            <person name="Allen J.E."/>
            <person name="Ambesi-Impiombato A."/>
            <person name="Apweiler R."/>
            <person name="Aturaliya R.N."/>
            <person name="Bailey T.L."/>
            <person name="Bansal M."/>
            <person name="Baxter L."/>
            <person name="Beisel K.W."/>
            <person name="Bersano T."/>
            <person name="Bono H."/>
            <person name="Chalk A.M."/>
            <person name="Chiu K.P."/>
            <person name="Choudhary V."/>
            <person name="Christoffels A."/>
            <person name="Clutterbuck D.R."/>
            <person name="Crowe M.L."/>
            <person name="Dalla E."/>
            <person name="Dalrymple B.P."/>
            <person name="de Bono B."/>
            <person name="Della Gatta G."/>
            <person name="di Bernardo D."/>
            <person name="Down T."/>
            <person name="Engstrom P."/>
            <person name="Fagiolini M."/>
            <person name="Faulkner G."/>
            <person name="Fletcher C.F."/>
            <person name="Fukushima T."/>
            <person name="Furuno M."/>
            <person name="Futaki S."/>
            <person name="Gariboldi M."/>
            <person name="Georgii-Hemming P."/>
            <person name="Gingeras T.R."/>
            <person name="Gojobori T."/>
            <person name="Green R.E."/>
            <person name="Gustincich S."/>
            <person name="Harbers M."/>
            <person name="Hayashi Y."/>
            <person name="Hensch T.K."/>
            <person name="Hirokawa N."/>
            <person name="Hill D."/>
            <person name="Huminiecki L."/>
            <person name="Iacono M."/>
            <person name="Ikeo K."/>
            <person name="Iwama A."/>
            <person name="Ishikawa T."/>
            <person name="Jakt M."/>
            <person name="Kanapin A."/>
            <person name="Katoh M."/>
            <person name="Kawasawa Y."/>
            <person name="Kelso J."/>
            <person name="Kitamura H."/>
            <person name="Kitano H."/>
            <person name="Kollias G."/>
            <person name="Krishnan S.P."/>
            <person name="Kruger A."/>
            <person name="Kummerfeld S.K."/>
            <person name="Kurochkin I.V."/>
            <person name="Lareau L.F."/>
            <person name="Lazarevic D."/>
            <person name="Lipovich L."/>
            <person name="Liu J."/>
            <person name="Liuni S."/>
            <person name="McWilliam S."/>
            <person name="Madan Babu M."/>
            <person name="Madera M."/>
            <person name="Marchionni L."/>
            <person name="Matsuda H."/>
            <person name="Matsuzawa S."/>
            <person name="Miki H."/>
            <person name="Mignone F."/>
            <person name="Miyake S."/>
            <person name="Morris K."/>
            <person name="Mottagui-Tabar S."/>
            <person name="Mulder N."/>
            <person name="Nakano N."/>
            <person name="Nakauchi H."/>
            <person name="Ng P."/>
            <person name="Nilsson R."/>
            <person name="Nishiguchi S."/>
            <person name="Nishikawa S."/>
            <person name="Nori F."/>
            <person name="Ohara O."/>
            <person name="Okazaki Y."/>
            <person name="Orlando V."/>
            <person name="Pang K.C."/>
            <person name="Pavan W.J."/>
            <person name="Pavesi G."/>
            <person name="Pesole G."/>
            <person name="Petrovsky N."/>
            <person name="Piazza S."/>
            <person name="Reed J."/>
            <person name="Reid J.F."/>
            <person name="Ring B.Z."/>
            <person name="Ringwald M."/>
            <person name="Rost B."/>
            <person name="Ruan Y."/>
            <person name="Salzberg S.L."/>
            <person name="Sandelin A."/>
            <person name="Schneider C."/>
            <person name="Schoenbach C."/>
            <person name="Sekiguchi K."/>
            <person name="Semple C.A."/>
            <person name="Seno S."/>
            <person name="Sessa L."/>
            <person name="Sheng Y."/>
            <person name="Shibata Y."/>
            <person name="Shimada H."/>
            <person name="Shimada K."/>
            <person name="Silva D."/>
            <person name="Sinclair B."/>
            <person name="Sperling S."/>
            <person name="Stupka E."/>
            <person name="Sugiura K."/>
            <person name="Sultana R."/>
            <person name="Takenaka Y."/>
            <person name="Taki K."/>
            <person name="Tammoja K."/>
            <person name="Tan S.L."/>
            <person name="Tang S."/>
            <person name="Taylor M.S."/>
            <person name="Tegner J."/>
            <person name="Teichmann S.A."/>
            <person name="Ueda H.R."/>
            <person name="van Nimwegen E."/>
            <person name="Verardo R."/>
            <person name="Wei C.L."/>
            <person name="Yagi K."/>
            <person name="Yamanishi H."/>
            <person name="Zabarovsky E."/>
            <person name="Zhu S."/>
            <person name="Zimmer A."/>
            <person name="Hide W."/>
            <person name="Bult C."/>
            <person name="Grimmond S.M."/>
            <person name="Teasdale R.D."/>
            <person name="Liu E.T."/>
            <person name="Brusic V."/>
            <person name="Quackenbush J."/>
            <person name="Wahlestedt C."/>
            <person name="Mattick J.S."/>
            <person name="Hume D.A."/>
            <person name="Kai C."/>
            <person name="Sasaki D."/>
            <person name="Tomaru Y."/>
            <person name="Fukuda S."/>
            <person name="Kanamori-Katayama M."/>
            <person name="Suzuki M."/>
            <person name="Aoki J."/>
            <person name="Arakawa T."/>
            <person name="Iida J."/>
            <person name="Imamura K."/>
            <person name="Itoh M."/>
            <person name="Kato T."/>
            <person name="Kawaji H."/>
            <person name="Kawagashira N."/>
            <person name="Kawashima T."/>
            <person name="Kojima M."/>
            <person name="Kondo S."/>
            <person name="Konno H."/>
            <person name="Nakano K."/>
            <person name="Ninomiya N."/>
            <person name="Nishio T."/>
            <person name="Okada M."/>
            <person name="Plessy C."/>
            <person name="Shibata K."/>
            <person name="Shiraki T."/>
            <person name="Suzuki S."/>
            <person name="Tagami M."/>
            <person name="Waki K."/>
            <person name="Watahiki A."/>
            <person name="Okamura-Oho Y."/>
            <person name="Suzuki H."/>
            <person name="Kawai J."/>
            <person name="Hayashizaki Y."/>
        </authorList>
    </citation>
    <scope>NUCLEOTIDE SEQUENCE [LARGE SCALE MRNA]</scope>
    <source>
        <strain>C57BL/6J</strain>
        <tissue>Eye</tissue>
    </source>
</reference>
<reference key="2">
    <citation type="journal article" date="2004" name="Genome Res.">
        <title>The status, quality, and expansion of the NIH full-length cDNA project: the Mammalian Gene Collection (MGC).</title>
        <authorList>
            <consortium name="The MGC Project Team"/>
        </authorList>
    </citation>
    <scope>NUCLEOTIDE SEQUENCE [LARGE SCALE MRNA]</scope>
</reference>
<evidence type="ECO:0000250" key="1"/>
<evidence type="ECO:0000250" key="2">
    <source>
        <dbReference type="UniProtKB" id="O88644"/>
    </source>
</evidence>
<evidence type="ECO:0000255" key="3">
    <source>
        <dbReference type="PROSITE-ProRule" id="PRU00639"/>
    </source>
</evidence>
<gene>
    <name type="primary">Grifin</name>
</gene>